<proteinExistence type="inferred from homology"/>
<keyword id="KW-0067">ATP-binding</keyword>
<keyword id="KW-0963">Cytoplasm</keyword>
<keyword id="KW-0418">Kinase</keyword>
<keyword id="KW-0547">Nucleotide-binding</keyword>
<keyword id="KW-0808">Transferase</keyword>
<feature type="chain" id="PRO_1000125301" description="Cytidylate kinase">
    <location>
        <begin position="1"/>
        <end position="223"/>
    </location>
</feature>
<feature type="binding site" evidence="1">
    <location>
        <begin position="10"/>
        <end position="18"/>
    </location>
    <ligand>
        <name>ATP</name>
        <dbReference type="ChEBI" id="CHEBI:30616"/>
    </ligand>
</feature>
<sequence length="223" mass="24625">MKTIQIAIDGPASSGKSTVAKIIAKDFGFTYLDTGAMYRAVTYMALKNQLGVEEVEALLALLDQHPISFGRSETGDQLVFVGDVDITHPIRENEVTNHVSAIAAIPQVREKLVSLQQEIAQQGGIVMDGRDIGTVVLPQAELKIFLVASVDERAERRYKENIAKGIETDLETLKKEIAARDYKDSHRETSPLKQAEDAVYLDTTGLNIQEVVEKIKAEAEKRM</sequence>
<organism>
    <name type="scientific">Streptococcus pneumoniae (strain 70585)</name>
    <dbReference type="NCBI Taxonomy" id="488221"/>
    <lineage>
        <taxon>Bacteria</taxon>
        <taxon>Bacillati</taxon>
        <taxon>Bacillota</taxon>
        <taxon>Bacilli</taxon>
        <taxon>Lactobacillales</taxon>
        <taxon>Streptococcaceae</taxon>
        <taxon>Streptococcus</taxon>
    </lineage>
</organism>
<accession>C1C8J2</accession>
<name>KCY_STRP7</name>
<evidence type="ECO:0000255" key="1">
    <source>
        <dbReference type="HAMAP-Rule" id="MF_00238"/>
    </source>
</evidence>
<protein>
    <recommendedName>
        <fullName evidence="1">Cytidylate kinase</fullName>
        <shortName evidence="1">CK</shortName>
        <ecNumber evidence="1">2.7.4.25</ecNumber>
    </recommendedName>
    <alternativeName>
        <fullName evidence="1">Cytidine monophosphate kinase</fullName>
        <shortName evidence="1">CMP kinase</shortName>
    </alternativeName>
</protein>
<comment type="catalytic activity">
    <reaction evidence="1">
        <text>CMP + ATP = CDP + ADP</text>
        <dbReference type="Rhea" id="RHEA:11600"/>
        <dbReference type="ChEBI" id="CHEBI:30616"/>
        <dbReference type="ChEBI" id="CHEBI:58069"/>
        <dbReference type="ChEBI" id="CHEBI:60377"/>
        <dbReference type="ChEBI" id="CHEBI:456216"/>
        <dbReference type="EC" id="2.7.4.25"/>
    </reaction>
</comment>
<comment type="catalytic activity">
    <reaction evidence="1">
        <text>dCMP + ATP = dCDP + ADP</text>
        <dbReference type="Rhea" id="RHEA:25094"/>
        <dbReference type="ChEBI" id="CHEBI:30616"/>
        <dbReference type="ChEBI" id="CHEBI:57566"/>
        <dbReference type="ChEBI" id="CHEBI:58593"/>
        <dbReference type="ChEBI" id="CHEBI:456216"/>
        <dbReference type="EC" id="2.7.4.25"/>
    </reaction>
</comment>
<comment type="subcellular location">
    <subcellularLocation>
        <location evidence="1">Cytoplasm</location>
    </subcellularLocation>
</comment>
<comment type="similarity">
    <text evidence="1">Belongs to the cytidylate kinase family. Type 1 subfamily.</text>
</comment>
<gene>
    <name evidence="1" type="primary">cmk</name>
    <name type="ordered locus">SP70585_1643</name>
</gene>
<reference key="1">
    <citation type="journal article" date="2010" name="Genome Biol.">
        <title>Structure and dynamics of the pan-genome of Streptococcus pneumoniae and closely related species.</title>
        <authorList>
            <person name="Donati C."/>
            <person name="Hiller N.L."/>
            <person name="Tettelin H."/>
            <person name="Muzzi A."/>
            <person name="Croucher N.J."/>
            <person name="Angiuoli S.V."/>
            <person name="Oggioni M."/>
            <person name="Dunning Hotopp J.C."/>
            <person name="Hu F.Z."/>
            <person name="Riley D.R."/>
            <person name="Covacci A."/>
            <person name="Mitchell T.J."/>
            <person name="Bentley S.D."/>
            <person name="Kilian M."/>
            <person name="Ehrlich G.D."/>
            <person name="Rappuoli R."/>
            <person name="Moxon E.R."/>
            <person name="Masignani V."/>
        </authorList>
    </citation>
    <scope>NUCLEOTIDE SEQUENCE [LARGE SCALE GENOMIC DNA]</scope>
    <source>
        <strain>70585</strain>
    </source>
</reference>
<dbReference type="EC" id="2.7.4.25" evidence="1"/>
<dbReference type="EMBL" id="CP000918">
    <property type="protein sequence ID" value="ACO17975.1"/>
    <property type="molecule type" value="Genomic_DNA"/>
</dbReference>
<dbReference type="RefSeq" id="WP_000849389.1">
    <property type="nucleotide sequence ID" value="NC_012468.1"/>
</dbReference>
<dbReference type="SMR" id="C1C8J2"/>
<dbReference type="KEGG" id="snm:SP70585_1643"/>
<dbReference type="HOGENOM" id="CLU_079959_0_2_9"/>
<dbReference type="Proteomes" id="UP000002211">
    <property type="component" value="Chromosome"/>
</dbReference>
<dbReference type="GO" id="GO:0005829">
    <property type="term" value="C:cytosol"/>
    <property type="evidence" value="ECO:0007669"/>
    <property type="project" value="TreeGrafter"/>
</dbReference>
<dbReference type="GO" id="GO:0005524">
    <property type="term" value="F:ATP binding"/>
    <property type="evidence" value="ECO:0007669"/>
    <property type="project" value="UniProtKB-UniRule"/>
</dbReference>
<dbReference type="GO" id="GO:0036430">
    <property type="term" value="F:CMP kinase activity"/>
    <property type="evidence" value="ECO:0007669"/>
    <property type="project" value="RHEA"/>
</dbReference>
<dbReference type="GO" id="GO:0036431">
    <property type="term" value="F:dCMP kinase activity"/>
    <property type="evidence" value="ECO:0007669"/>
    <property type="project" value="RHEA"/>
</dbReference>
<dbReference type="GO" id="GO:0015949">
    <property type="term" value="P:nucleobase-containing small molecule interconversion"/>
    <property type="evidence" value="ECO:0007669"/>
    <property type="project" value="TreeGrafter"/>
</dbReference>
<dbReference type="GO" id="GO:0006220">
    <property type="term" value="P:pyrimidine nucleotide metabolic process"/>
    <property type="evidence" value="ECO:0007669"/>
    <property type="project" value="UniProtKB-UniRule"/>
</dbReference>
<dbReference type="CDD" id="cd02020">
    <property type="entry name" value="CMPK"/>
    <property type="match status" value="1"/>
</dbReference>
<dbReference type="FunFam" id="3.40.50.300:FF:000484">
    <property type="entry name" value="Cytidylate kinase"/>
    <property type="match status" value="1"/>
</dbReference>
<dbReference type="Gene3D" id="3.40.50.300">
    <property type="entry name" value="P-loop containing nucleotide triphosphate hydrolases"/>
    <property type="match status" value="1"/>
</dbReference>
<dbReference type="HAMAP" id="MF_00238">
    <property type="entry name" value="Cytidyl_kinase_type1"/>
    <property type="match status" value="1"/>
</dbReference>
<dbReference type="InterPro" id="IPR003136">
    <property type="entry name" value="Cytidylate_kin"/>
</dbReference>
<dbReference type="InterPro" id="IPR011994">
    <property type="entry name" value="Cytidylate_kinase_dom"/>
</dbReference>
<dbReference type="InterPro" id="IPR027417">
    <property type="entry name" value="P-loop_NTPase"/>
</dbReference>
<dbReference type="NCBIfam" id="TIGR00017">
    <property type="entry name" value="cmk"/>
    <property type="match status" value="1"/>
</dbReference>
<dbReference type="PANTHER" id="PTHR21299:SF2">
    <property type="entry name" value="CYTIDYLATE KINASE"/>
    <property type="match status" value="1"/>
</dbReference>
<dbReference type="PANTHER" id="PTHR21299">
    <property type="entry name" value="CYTIDYLATE KINASE/PANTOATE-BETA-ALANINE LIGASE"/>
    <property type="match status" value="1"/>
</dbReference>
<dbReference type="Pfam" id="PF02224">
    <property type="entry name" value="Cytidylate_kin"/>
    <property type="match status" value="1"/>
</dbReference>
<dbReference type="SUPFAM" id="SSF52540">
    <property type="entry name" value="P-loop containing nucleoside triphosphate hydrolases"/>
    <property type="match status" value="1"/>
</dbReference>